<accession>P35597</accession>
<gene>
    <name type="primary">exp7</name>
    <name type="ordered locus">SP_1623</name>
</gene>
<protein>
    <recommendedName>
        <fullName>Probable cation-transporting ATPase exp7</fullName>
        <ecNumber>7.2.2.-</ecNumber>
    </recommendedName>
    <alternativeName>
        <fullName>Exported protein 7</fullName>
    </alternativeName>
</protein>
<sequence length="778" mass="85531">MDKNKIMGLTQREVKERQAEGLVNDFTASASTSTWQIVKRNVFTLFNALNFAIALALAFVQAWSNLVFFAVICFNAFSGIVTELRAKHMVDKLNLMTKEKVKTIRDGQEVALNPEELVLGDVIRLSAGEQIPSDALVLEGFAEVNEAMLTGESDLVQKEVDGLLLSGSFLASGSVLSQVHHVGADNYAAKLMLEAKTVKPINSRIMKSLDKLAGFTGKIIIPFGLALLLEALLLKGLPLKSSVVNSSTALLGMLPKGIALLTITSLLTAVIKLGLKKVLVQEMYSVETLARVDMLCLDKTGTITQGKMQVEAVLPLTETYGEEAIASILTSYMAHSEDKNPTAQAIRQRFVGDVAYPMISNLPFSSDRKWGAMELEGLGTVFLGAPEMLLDSEVPEAREALERGSRVLVLALSQEKLDHHKPQKPSDIQALALLEILDPIREGAAETLDYLRSQEVGLKIISGDNPVTVSSIAQKAGFADYHSYVDCSKITDEELMAMAEETAIFGRVSPHQKKLIIQTLKKAGHTTAMTGDGVNDILALREADCSIVMAEGDPATRQIANLVLLNSDFNDVPEILFEGRRVVNNIAHIAPIFLIKTIYSFLLAVICIASALLGRSEWILIFPFIPIQITMIDQFVEGFPPFVLTFERNIKPVEQNFLRKSMLRALPSALMVVFSVLFVKMFGASQGWSELEISTLLYYLLGSIGFLSVFRACMPFTLWRVLLIVWSVGGFLATALFPRIQKLLEISTLTEQTLPVYGVMMLVFTVIFILTSRYQAKK</sequence>
<reference key="1">
    <citation type="journal article" date="2001" name="Science">
        <title>Complete genome sequence of a virulent isolate of Streptococcus pneumoniae.</title>
        <authorList>
            <person name="Tettelin H."/>
            <person name="Nelson K.E."/>
            <person name="Paulsen I.T."/>
            <person name="Eisen J.A."/>
            <person name="Read T.D."/>
            <person name="Peterson S.N."/>
            <person name="Heidelberg J.F."/>
            <person name="DeBoy R.T."/>
            <person name="Haft D.H."/>
            <person name="Dodson R.J."/>
            <person name="Durkin A.S."/>
            <person name="Gwinn M.L."/>
            <person name="Kolonay J.F."/>
            <person name="Nelson W.C."/>
            <person name="Peterson J.D."/>
            <person name="Umayam L.A."/>
            <person name="White O."/>
            <person name="Salzberg S.L."/>
            <person name="Lewis M.R."/>
            <person name="Radune D."/>
            <person name="Holtzapple E.K."/>
            <person name="Khouri H.M."/>
            <person name="Wolf A.M."/>
            <person name="Utterback T.R."/>
            <person name="Hansen C.L."/>
            <person name="McDonald L.A."/>
            <person name="Feldblyum T.V."/>
            <person name="Angiuoli S.V."/>
            <person name="Dickinson T."/>
            <person name="Hickey E.K."/>
            <person name="Holt I.E."/>
            <person name="Loftus B.J."/>
            <person name="Yang F."/>
            <person name="Smith H.O."/>
            <person name="Venter J.C."/>
            <person name="Dougherty B.A."/>
            <person name="Morrison D.A."/>
            <person name="Hollingshead S.K."/>
            <person name="Fraser C.M."/>
        </authorList>
    </citation>
    <scope>NUCLEOTIDE SEQUENCE [LARGE SCALE GENOMIC DNA]</scope>
    <source>
        <strain>ATCC BAA-334 / TIGR4</strain>
    </source>
</reference>
<reference key="2">
    <citation type="journal article" date="1993" name="Mol. Microbiol.">
        <title>Genetic identification of exported proteins in Streptococcus pneumoniae.</title>
        <authorList>
            <person name="Pearce B.J."/>
            <person name="Yin Y.B."/>
            <person name="Masure H.R."/>
        </authorList>
    </citation>
    <scope>NUCLEOTIDE SEQUENCE [GENOMIC DNA] OF 402-482</scope>
    <source>
        <strain>R6x</strain>
    </source>
</reference>
<feature type="chain" id="PRO_0000046186" description="Probable cation-transporting ATPase exp7">
    <location>
        <begin position="1"/>
        <end position="778"/>
    </location>
</feature>
<feature type="topological domain" description="Cytoplasmic" evidence="2">
    <location>
        <begin position="1"/>
        <end position="37"/>
    </location>
</feature>
<feature type="transmembrane region" description="Helical" evidence="2">
    <location>
        <begin position="38"/>
        <end position="57"/>
    </location>
</feature>
<feature type="topological domain" description="Extracellular" evidence="2">
    <location>
        <begin position="58"/>
        <end position="64"/>
    </location>
</feature>
<feature type="transmembrane region" description="Helical" evidence="2">
    <location>
        <begin position="65"/>
        <end position="84"/>
    </location>
</feature>
<feature type="topological domain" description="Cytoplasmic" evidence="2">
    <location>
        <begin position="85"/>
        <end position="209"/>
    </location>
</feature>
<feature type="transmembrane region" description="Helical" evidence="2">
    <location>
        <begin position="210"/>
        <end position="229"/>
    </location>
</feature>
<feature type="topological domain" description="Extracellular" evidence="2">
    <location>
        <begin position="230"/>
        <end position="242"/>
    </location>
</feature>
<feature type="transmembrane region" description="Helical" evidence="2">
    <location>
        <begin position="243"/>
        <end position="260"/>
    </location>
</feature>
<feature type="topological domain" description="Cytoplasmic" evidence="2">
    <location>
        <begin position="261"/>
        <end position="586"/>
    </location>
</feature>
<feature type="transmembrane region" description="Helical" evidence="2">
    <location>
        <begin position="587"/>
        <end position="606"/>
    </location>
</feature>
<feature type="topological domain" description="Extracellular" evidence="2">
    <location>
        <begin position="607"/>
        <end position="624"/>
    </location>
</feature>
<feature type="transmembrane region" description="Helical" evidence="2">
    <location>
        <begin position="625"/>
        <end position="645"/>
    </location>
</feature>
<feature type="topological domain" description="Cytoplasmic" evidence="2">
    <location>
        <begin position="646"/>
        <end position="663"/>
    </location>
</feature>
<feature type="transmembrane region" description="Helical" evidence="2">
    <location>
        <begin position="664"/>
        <end position="684"/>
    </location>
</feature>
<feature type="topological domain" description="Extracellular" evidence="2">
    <location>
        <begin position="685"/>
        <end position="689"/>
    </location>
</feature>
<feature type="transmembrane region" description="Helical" evidence="2">
    <location>
        <begin position="690"/>
        <end position="708"/>
    </location>
</feature>
<feature type="topological domain" description="Cytoplasmic" evidence="2">
    <location>
        <begin position="709"/>
        <end position="716"/>
    </location>
</feature>
<feature type="transmembrane region" description="Helical" evidence="2">
    <location>
        <begin position="717"/>
        <end position="739"/>
    </location>
</feature>
<feature type="topological domain" description="Extracellular" evidence="2">
    <location>
        <begin position="740"/>
        <end position="757"/>
    </location>
</feature>
<feature type="transmembrane region" description="Helical" evidence="2">
    <location>
        <begin position="758"/>
        <end position="777"/>
    </location>
</feature>
<feature type="topological domain" description="Cytoplasmic" evidence="2">
    <location>
        <position position="778"/>
    </location>
</feature>
<feature type="active site" description="4-aspartylphosphate intermediate" evidence="1">
    <location>
        <position position="298"/>
    </location>
</feature>
<feature type="binding site" evidence="1">
    <location>
        <position position="532"/>
    </location>
    <ligand>
        <name>Mg(2+)</name>
        <dbReference type="ChEBI" id="CHEBI:18420"/>
    </ligand>
</feature>
<feature type="binding site" evidence="1">
    <location>
        <position position="536"/>
    </location>
    <ligand>
        <name>Mg(2+)</name>
        <dbReference type="ChEBI" id="CHEBI:18420"/>
    </ligand>
</feature>
<feature type="sequence conflict" description="In Ref. 2; AAA26883." evidence="3" ref="2">
    <original>ERGSRVLVLA</original>
    <variation>TASEFELGTP</variation>
    <location>
        <begin position="402"/>
        <end position="411"/>
    </location>
</feature>
<name>EXP7_STRPN</name>
<keyword id="KW-0067">ATP-binding</keyword>
<keyword id="KW-1003">Cell membrane</keyword>
<keyword id="KW-0460">Magnesium</keyword>
<keyword id="KW-0472">Membrane</keyword>
<keyword id="KW-0479">Metal-binding</keyword>
<keyword id="KW-0547">Nucleotide-binding</keyword>
<keyword id="KW-0597">Phosphoprotein</keyword>
<keyword id="KW-1185">Reference proteome</keyword>
<keyword id="KW-1278">Translocase</keyword>
<keyword id="KW-0812">Transmembrane</keyword>
<keyword id="KW-1133">Transmembrane helix</keyword>
<organism>
    <name type="scientific">Streptococcus pneumoniae serotype 4 (strain ATCC BAA-334 / TIGR4)</name>
    <dbReference type="NCBI Taxonomy" id="170187"/>
    <lineage>
        <taxon>Bacteria</taxon>
        <taxon>Bacillati</taxon>
        <taxon>Bacillota</taxon>
        <taxon>Bacilli</taxon>
        <taxon>Lactobacillales</taxon>
        <taxon>Streptococcaceae</taxon>
        <taxon>Streptococcus</taxon>
    </lineage>
</organism>
<proteinExistence type="inferred from homology"/>
<comment type="catalytic activity">
    <reaction>
        <text>ATP + H2O = ADP + phosphate + H(+)</text>
        <dbReference type="Rhea" id="RHEA:13065"/>
        <dbReference type="ChEBI" id="CHEBI:15377"/>
        <dbReference type="ChEBI" id="CHEBI:15378"/>
        <dbReference type="ChEBI" id="CHEBI:30616"/>
        <dbReference type="ChEBI" id="CHEBI:43474"/>
        <dbReference type="ChEBI" id="CHEBI:456216"/>
    </reaction>
</comment>
<comment type="subcellular location">
    <subcellularLocation>
        <location evidence="3">Cell membrane</location>
        <topology evidence="3">Multi-pass membrane protein</topology>
    </subcellularLocation>
</comment>
<comment type="similarity">
    <text evidence="3">Belongs to the cation transport ATPase (P-type) (TC 3.A.3) family.</text>
</comment>
<evidence type="ECO:0000250" key="1"/>
<evidence type="ECO:0000255" key="2"/>
<evidence type="ECO:0000305" key="3"/>
<dbReference type="EC" id="7.2.2.-"/>
<dbReference type="EMBL" id="AE005672">
    <property type="protein sequence ID" value="AAK75703.1"/>
    <property type="molecule type" value="Genomic_DNA"/>
</dbReference>
<dbReference type="EMBL" id="L20561">
    <property type="protein sequence ID" value="AAA26883.1"/>
    <property type="molecule type" value="Genomic_DNA"/>
</dbReference>
<dbReference type="PIR" id="F95188">
    <property type="entry name" value="F95188"/>
</dbReference>
<dbReference type="RefSeq" id="WP_000360054.1">
    <property type="nucleotide sequence ID" value="NC_003028.3"/>
</dbReference>
<dbReference type="SMR" id="P35597"/>
<dbReference type="PaxDb" id="170187-SP_1623"/>
<dbReference type="DNASU" id="931480"/>
<dbReference type="EnsemblBacteria" id="AAK75703">
    <property type="protein sequence ID" value="AAK75703"/>
    <property type="gene ID" value="SP_1623"/>
</dbReference>
<dbReference type="KEGG" id="spn:SP_1623"/>
<dbReference type="eggNOG" id="COG0474">
    <property type="taxonomic scope" value="Bacteria"/>
</dbReference>
<dbReference type="PhylomeDB" id="P35597"/>
<dbReference type="BioCyc" id="SPNE170187:G1FZB-1642-MONOMER"/>
<dbReference type="Proteomes" id="UP000000585">
    <property type="component" value="Chromosome"/>
</dbReference>
<dbReference type="GO" id="GO:0005886">
    <property type="term" value="C:plasma membrane"/>
    <property type="evidence" value="ECO:0007669"/>
    <property type="project" value="UniProtKB-SubCell"/>
</dbReference>
<dbReference type="GO" id="GO:0005524">
    <property type="term" value="F:ATP binding"/>
    <property type="evidence" value="ECO:0007669"/>
    <property type="project" value="UniProtKB-KW"/>
</dbReference>
<dbReference type="GO" id="GO:0016887">
    <property type="term" value="F:ATP hydrolysis activity"/>
    <property type="evidence" value="ECO:0007669"/>
    <property type="project" value="InterPro"/>
</dbReference>
<dbReference type="GO" id="GO:0046872">
    <property type="term" value="F:metal ion binding"/>
    <property type="evidence" value="ECO:0007669"/>
    <property type="project" value="UniProtKB-KW"/>
</dbReference>
<dbReference type="CDD" id="cd02609">
    <property type="entry name" value="P-type_ATPase"/>
    <property type="match status" value="1"/>
</dbReference>
<dbReference type="FunFam" id="3.40.1110.10:FF:000127">
    <property type="entry name" value="Probable cation-transporting ATPase exp7"/>
    <property type="match status" value="1"/>
</dbReference>
<dbReference type="Gene3D" id="3.40.1110.10">
    <property type="entry name" value="Calcium-transporting ATPase, cytoplasmic domain N"/>
    <property type="match status" value="1"/>
</dbReference>
<dbReference type="Gene3D" id="2.70.150.10">
    <property type="entry name" value="Calcium-transporting ATPase, cytoplasmic transduction domain A"/>
    <property type="match status" value="1"/>
</dbReference>
<dbReference type="Gene3D" id="1.20.1110.10">
    <property type="entry name" value="Calcium-transporting ATPase, transmembrane domain"/>
    <property type="match status" value="1"/>
</dbReference>
<dbReference type="Gene3D" id="3.40.50.1000">
    <property type="entry name" value="HAD superfamily/HAD-like"/>
    <property type="match status" value="1"/>
</dbReference>
<dbReference type="InterPro" id="IPR023299">
    <property type="entry name" value="ATPase_P-typ_cyto_dom_N"/>
</dbReference>
<dbReference type="InterPro" id="IPR018303">
    <property type="entry name" value="ATPase_P-typ_P_site"/>
</dbReference>
<dbReference type="InterPro" id="IPR023298">
    <property type="entry name" value="ATPase_P-typ_TM_dom_sf"/>
</dbReference>
<dbReference type="InterPro" id="IPR008250">
    <property type="entry name" value="ATPase_P-typ_transduc_dom_A_sf"/>
</dbReference>
<dbReference type="InterPro" id="IPR036412">
    <property type="entry name" value="HAD-like_sf"/>
</dbReference>
<dbReference type="InterPro" id="IPR023214">
    <property type="entry name" value="HAD_sf"/>
</dbReference>
<dbReference type="InterPro" id="IPR001757">
    <property type="entry name" value="P_typ_ATPase"/>
</dbReference>
<dbReference type="InterPro" id="IPR044492">
    <property type="entry name" value="P_typ_ATPase_HD_dom"/>
</dbReference>
<dbReference type="NCBIfam" id="TIGR01494">
    <property type="entry name" value="ATPase_P-type"/>
    <property type="match status" value="2"/>
</dbReference>
<dbReference type="PANTHER" id="PTHR42861">
    <property type="entry name" value="CALCIUM-TRANSPORTING ATPASE"/>
    <property type="match status" value="1"/>
</dbReference>
<dbReference type="Pfam" id="PF00122">
    <property type="entry name" value="E1-E2_ATPase"/>
    <property type="match status" value="1"/>
</dbReference>
<dbReference type="Pfam" id="PF00702">
    <property type="entry name" value="Hydrolase"/>
    <property type="match status" value="1"/>
</dbReference>
<dbReference type="PRINTS" id="PR00119">
    <property type="entry name" value="CATATPASE"/>
</dbReference>
<dbReference type="SFLD" id="SFLDG00002">
    <property type="entry name" value="C1.7:_P-type_atpase_like"/>
    <property type="match status" value="1"/>
</dbReference>
<dbReference type="SFLD" id="SFLDF00027">
    <property type="entry name" value="p-type_atpase"/>
    <property type="match status" value="1"/>
</dbReference>
<dbReference type="SUPFAM" id="SSF81653">
    <property type="entry name" value="Calcium ATPase, transduction domain A"/>
    <property type="match status" value="1"/>
</dbReference>
<dbReference type="SUPFAM" id="SSF81665">
    <property type="entry name" value="Calcium ATPase, transmembrane domain M"/>
    <property type="match status" value="1"/>
</dbReference>
<dbReference type="SUPFAM" id="SSF56784">
    <property type="entry name" value="HAD-like"/>
    <property type="match status" value="1"/>
</dbReference>
<dbReference type="SUPFAM" id="SSF81660">
    <property type="entry name" value="Metal cation-transporting ATPase, ATP-binding domain N"/>
    <property type="match status" value="1"/>
</dbReference>
<dbReference type="PROSITE" id="PS00154">
    <property type="entry name" value="ATPASE_E1_E2"/>
    <property type="match status" value="1"/>
</dbReference>